<reference key="1">
    <citation type="submission" date="2007-11" db="EMBL/GenBank/DDBJ databases">
        <authorList>
            <consortium name="The Salmonella enterica serovar Paratyphi B Genome Sequencing Project"/>
            <person name="McClelland M."/>
            <person name="Sanderson E.K."/>
            <person name="Porwollik S."/>
            <person name="Spieth J."/>
            <person name="Clifton W.S."/>
            <person name="Fulton R."/>
            <person name="Cordes M."/>
            <person name="Wollam A."/>
            <person name="Shah N."/>
            <person name="Pepin K."/>
            <person name="Bhonagiri V."/>
            <person name="Nash W."/>
            <person name="Johnson M."/>
            <person name="Thiruvilangam P."/>
            <person name="Wilson R."/>
        </authorList>
    </citation>
    <scope>NUCLEOTIDE SEQUENCE [LARGE SCALE GENOMIC DNA]</scope>
    <source>
        <strain>ATCC BAA-1250 / SPB7</strain>
    </source>
</reference>
<gene>
    <name evidence="1" type="primary">dut</name>
    <name type="ordered locus">SPAB_04630</name>
</gene>
<protein>
    <recommendedName>
        <fullName evidence="1">Deoxyuridine 5'-triphosphate nucleotidohydrolase</fullName>
        <shortName evidence="1">dUTPase</shortName>
        <ecNumber evidence="1">3.6.1.23</ecNumber>
    </recommendedName>
    <alternativeName>
        <fullName evidence="1">dUTP pyrophosphatase</fullName>
    </alternativeName>
</protein>
<feature type="chain" id="PRO_1000076069" description="Deoxyuridine 5'-triphosphate nucleotidohydrolase">
    <location>
        <begin position="1"/>
        <end position="152"/>
    </location>
</feature>
<feature type="binding site" evidence="1">
    <location>
        <begin position="71"/>
        <end position="73"/>
    </location>
    <ligand>
        <name>substrate</name>
    </ligand>
</feature>
<feature type="binding site" evidence="1">
    <location>
        <position position="84"/>
    </location>
    <ligand>
        <name>substrate</name>
    </ligand>
</feature>
<feature type="binding site" evidence="1">
    <location>
        <begin position="88"/>
        <end position="90"/>
    </location>
    <ligand>
        <name>substrate</name>
    </ligand>
</feature>
<feature type="binding site" evidence="1">
    <location>
        <position position="98"/>
    </location>
    <ligand>
        <name>substrate</name>
    </ligand>
</feature>
<sequence length="152" mass="16168">MMKKIDVKILDPRVGQQFPLPTYATSGSAGLDLRACLDDAVELAPGATTLVPTGLAIHIADPSLAAVMLPRSGLGHKHGIVLGNLVGLIDSDYQGQLMVSIWNRGQDSFTIEPGERIAQMVFVPVVQAEFNLVEAFDATERGEGGFGHSGRK</sequence>
<proteinExistence type="inferred from homology"/>
<name>DUT_SALPB</name>
<keyword id="KW-0378">Hydrolase</keyword>
<keyword id="KW-0460">Magnesium</keyword>
<keyword id="KW-0479">Metal-binding</keyword>
<keyword id="KW-0546">Nucleotide metabolism</keyword>
<comment type="function">
    <text evidence="1">This enzyme is involved in nucleotide metabolism: it produces dUMP, the immediate precursor of thymidine nucleotides and it decreases the intracellular concentration of dUTP so that uracil cannot be incorporated into DNA.</text>
</comment>
<comment type="catalytic activity">
    <reaction evidence="1">
        <text>dUTP + H2O = dUMP + diphosphate + H(+)</text>
        <dbReference type="Rhea" id="RHEA:10248"/>
        <dbReference type="ChEBI" id="CHEBI:15377"/>
        <dbReference type="ChEBI" id="CHEBI:15378"/>
        <dbReference type="ChEBI" id="CHEBI:33019"/>
        <dbReference type="ChEBI" id="CHEBI:61555"/>
        <dbReference type="ChEBI" id="CHEBI:246422"/>
        <dbReference type="EC" id="3.6.1.23"/>
    </reaction>
</comment>
<comment type="cofactor">
    <cofactor evidence="1">
        <name>Mg(2+)</name>
        <dbReference type="ChEBI" id="CHEBI:18420"/>
    </cofactor>
</comment>
<comment type="pathway">
    <text evidence="1">Pyrimidine metabolism; dUMP biosynthesis; dUMP from dCTP (dUTP route): step 2/2.</text>
</comment>
<comment type="similarity">
    <text evidence="1">Belongs to the dUTPase family.</text>
</comment>
<dbReference type="EC" id="3.6.1.23" evidence="1"/>
<dbReference type="EMBL" id="CP000886">
    <property type="protein sequence ID" value="ABX69943.1"/>
    <property type="molecule type" value="Genomic_DNA"/>
</dbReference>
<dbReference type="RefSeq" id="WP_000976078.1">
    <property type="nucleotide sequence ID" value="NC_010102.1"/>
</dbReference>
<dbReference type="SMR" id="A9MVN5"/>
<dbReference type="KEGG" id="spq:SPAB_04630"/>
<dbReference type="PATRIC" id="fig|1016998.12.peg.4356"/>
<dbReference type="HOGENOM" id="CLU_068508_1_1_6"/>
<dbReference type="UniPathway" id="UPA00610">
    <property type="reaction ID" value="UER00666"/>
</dbReference>
<dbReference type="Proteomes" id="UP000008556">
    <property type="component" value="Chromosome"/>
</dbReference>
<dbReference type="GO" id="GO:0004170">
    <property type="term" value="F:dUTP diphosphatase activity"/>
    <property type="evidence" value="ECO:0007669"/>
    <property type="project" value="UniProtKB-UniRule"/>
</dbReference>
<dbReference type="GO" id="GO:0000287">
    <property type="term" value="F:magnesium ion binding"/>
    <property type="evidence" value="ECO:0007669"/>
    <property type="project" value="UniProtKB-UniRule"/>
</dbReference>
<dbReference type="GO" id="GO:0006226">
    <property type="term" value="P:dUMP biosynthetic process"/>
    <property type="evidence" value="ECO:0007669"/>
    <property type="project" value="UniProtKB-UniRule"/>
</dbReference>
<dbReference type="GO" id="GO:0046081">
    <property type="term" value="P:dUTP catabolic process"/>
    <property type="evidence" value="ECO:0007669"/>
    <property type="project" value="InterPro"/>
</dbReference>
<dbReference type="CDD" id="cd07557">
    <property type="entry name" value="trimeric_dUTPase"/>
    <property type="match status" value="1"/>
</dbReference>
<dbReference type="FunFam" id="2.70.40.10:FF:000002">
    <property type="entry name" value="dUTP diphosphatase"/>
    <property type="match status" value="1"/>
</dbReference>
<dbReference type="Gene3D" id="2.70.40.10">
    <property type="match status" value="1"/>
</dbReference>
<dbReference type="HAMAP" id="MF_00116">
    <property type="entry name" value="dUTPase_bact"/>
    <property type="match status" value="1"/>
</dbReference>
<dbReference type="InterPro" id="IPR008181">
    <property type="entry name" value="dUTPase"/>
</dbReference>
<dbReference type="InterPro" id="IPR029054">
    <property type="entry name" value="dUTPase-like"/>
</dbReference>
<dbReference type="InterPro" id="IPR036157">
    <property type="entry name" value="dUTPase-like_sf"/>
</dbReference>
<dbReference type="InterPro" id="IPR033704">
    <property type="entry name" value="dUTPase_trimeric"/>
</dbReference>
<dbReference type="NCBIfam" id="TIGR00576">
    <property type="entry name" value="dut"/>
    <property type="match status" value="1"/>
</dbReference>
<dbReference type="NCBIfam" id="NF001862">
    <property type="entry name" value="PRK00601.1"/>
    <property type="match status" value="1"/>
</dbReference>
<dbReference type="PANTHER" id="PTHR11241">
    <property type="entry name" value="DEOXYURIDINE 5'-TRIPHOSPHATE NUCLEOTIDOHYDROLASE"/>
    <property type="match status" value="1"/>
</dbReference>
<dbReference type="PANTHER" id="PTHR11241:SF0">
    <property type="entry name" value="DEOXYURIDINE 5'-TRIPHOSPHATE NUCLEOTIDOHYDROLASE"/>
    <property type="match status" value="1"/>
</dbReference>
<dbReference type="Pfam" id="PF00692">
    <property type="entry name" value="dUTPase"/>
    <property type="match status" value="1"/>
</dbReference>
<dbReference type="SUPFAM" id="SSF51283">
    <property type="entry name" value="dUTPase-like"/>
    <property type="match status" value="1"/>
</dbReference>
<evidence type="ECO:0000255" key="1">
    <source>
        <dbReference type="HAMAP-Rule" id="MF_00116"/>
    </source>
</evidence>
<accession>A9MVN5</accession>
<organism>
    <name type="scientific">Salmonella paratyphi B (strain ATCC BAA-1250 / SPB7)</name>
    <dbReference type="NCBI Taxonomy" id="1016998"/>
    <lineage>
        <taxon>Bacteria</taxon>
        <taxon>Pseudomonadati</taxon>
        <taxon>Pseudomonadota</taxon>
        <taxon>Gammaproteobacteria</taxon>
        <taxon>Enterobacterales</taxon>
        <taxon>Enterobacteriaceae</taxon>
        <taxon>Salmonella</taxon>
    </lineage>
</organism>